<dbReference type="EC" id="1.1.1.282" evidence="1"/>
<dbReference type="EMBL" id="CP001113">
    <property type="protein sequence ID" value="ACF63946.1"/>
    <property type="molecule type" value="Genomic_DNA"/>
</dbReference>
<dbReference type="RefSeq" id="WP_000383488.1">
    <property type="nucleotide sequence ID" value="NZ_CCMR01000003.1"/>
</dbReference>
<dbReference type="SMR" id="B4T4Q4"/>
<dbReference type="KEGG" id="see:SNSL254_A1471"/>
<dbReference type="HOGENOM" id="CLU_044063_4_4_6"/>
<dbReference type="UniPathway" id="UPA00053">
    <property type="reaction ID" value="UER00087"/>
</dbReference>
<dbReference type="Proteomes" id="UP000008824">
    <property type="component" value="Chromosome"/>
</dbReference>
<dbReference type="GO" id="GO:0030266">
    <property type="term" value="F:quinate 3-dehydrogenase (NAD+) activity"/>
    <property type="evidence" value="ECO:0007669"/>
    <property type="project" value="UniProtKB-UniRule"/>
</dbReference>
<dbReference type="GO" id="GO:0052733">
    <property type="term" value="F:quinate 3-dehydrogenase (NADP+) activity"/>
    <property type="evidence" value="ECO:0007669"/>
    <property type="project" value="InterPro"/>
</dbReference>
<dbReference type="GO" id="GO:0052734">
    <property type="term" value="F:shikimate 3-dehydrogenase (NAD+) activity"/>
    <property type="evidence" value="ECO:0007669"/>
    <property type="project" value="InterPro"/>
</dbReference>
<dbReference type="GO" id="GO:0004764">
    <property type="term" value="F:shikimate 3-dehydrogenase (NADP+) activity"/>
    <property type="evidence" value="ECO:0007669"/>
    <property type="project" value="UniProtKB-UniRule"/>
</dbReference>
<dbReference type="GO" id="GO:0008652">
    <property type="term" value="P:amino acid biosynthetic process"/>
    <property type="evidence" value="ECO:0007669"/>
    <property type="project" value="UniProtKB-KW"/>
</dbReference>
<dbReference type="GO" id="GO:0009073">
    <property type="term" value="P:aromatic amino acid family biosynthetic process"/>
    <property type="evidence" value="ECO:0007669"/>
    <property type="project" value="UniProtKB-KW"/>
</dbReference>
<dbReference type="GO" id="GO:0009423">
    <property type="term" value="P:chorismate biosynthetic process"/>
    <property type="evidence" value="ECO:0007669"/>
    <property type="project" value="UniProtKB-UniRule"/>
</dbReference>
<dbReference type="GO" id="GO:0019632">
    <property type="term" value="P:shikimate metabolic process"/>
    <property type="evidence" value="ECO:0007669"/>
    <property type="project" value="TreeGrafter"/>
</dbReference>
<dbReference type="CDD" id="cd01065">
    <property type="entry name" value="NAD_bind_Shikimate_DH"/>
    <property type="match status" value="1"/>
</dbReference>
<dbReference type="FunFam" id="3.40.50.10860:FF:000004">
    <property type="entry name" value="Quinate/shikimate dehydrogenase"/>
    <property type="match status" value="1"/>
</dbReference>
<dbReference type="FunFam" id="3.40.50.720:FF:000086">
    <property type="entry name" value="Quinate/shikimate dehydrogenase"/>
    <property type="match status" value="1"/>
</dbReference>
<dbReference type="Gene3D" id="3.40.50.10860">
    <property type="entry name" value="Leucine Dehydrogenase, chain A, domain 1"/>
    <property type="match status" value="1"/>
</dbReference>
<dbReference type="Gene3D" id="3.40.50.720">
    <property type="entry name" value="NAD(P)-binding Rossmann-like Domain"/>
    <property type="match status" value="1"/>
</dbReference>
<dbReference type="HAMAP" id="MF_00222">
    <property type="entry name" value="Shikimate_DH_AroE"/>
    <property type="match status" value="1"/>
</dbReference>
<dbReference type="HAMAP" id="MF_01578">
    <property type="entry name" value="Shikimate_DH_YdiB"/>
    <property type="match status" value="1"/>
</dbReference>
<dbReference type="InterPro" id="IPR046346">
    <property type="entry name" value="Aminoacid_DH-like_N_sf"/>
</dbReference>
<dbReference type="InterPro" id="IPR036291">
    <property type="entry name" value="NAD(P)-bd_dom_sf"/>
</dbReference>
<dbReference type="InterPro" id="IPR022872">
    <property type="entry name" value="Quinate/Shikimate_DH"/>
</dbReference>
<dbReference type="InterPro" id="IPR041121">
    <property type="entry name" value="SDH_C"/>
</dbReference>
<dbReference type="InterPro" id="IPR013708">
    <property type="entry name" value="Shikimate_DH-bd_N"/>
</dbReference>
<dbReference type="InterPro" id="IPR022893">
    <property type="entry name" value="Shikimate_DH_fam"/>
</dbReference>
<dbReference type="NCBIfam" id="NF009390">
    <property type="entry name" value="PRK12749.1"/>
    <property type="match status" value="1"/>
</dbReference>
<dbReference type="PANTHER" id="PTHR21089:SF1">
    <property type="entry name" value="BIFUNCTIONAL 3-DEHYDROQUINATE DEHYDRATASE_SHIKIMATE DEHYDROGENASE, CHLOROPLASTIC"/>
    <property type="match status" value="1"/>
</dbReference>
<dbReference type="PANTHER" id="PTHR21089">
    <property type="entry name" value="SHIKIMATE DEHYDROGENASE"/>
    <property type="match status" value="1"/>
</dbReference>
<dbReference type="Pfam" id="PF18317">
    <property type="entry name" value="SDH_C"/>
    <property type="match status" value="1"/>
</dbReference>
<dbReference type="Pfam" id="PF08501">
    <property type="entry name" value="Shikimate_dh_N"/>
    <property type="match status" value="1"/>
</dbReference>
<dbReference type="SUPFAM" id="SSF53223">
    <property type="entry name" value="Aminoacid dehydrogenase-like, N-terminal domain"/>
    <property type="match status" value="1"/>
</dbReference>
<dbReference type="SUPFAM" id="SSF51735">
    <property type="entry name" value="NAD(P)-binding Rossmann-fold domains"/>
    <property type="match status" value="1"/>
</dbReference>
<protein>
    <recommendedName>
        <fullName evidence="1">Quinate/shikimate dehydrogenase</fullName>
        <ecNumber evidence="1">1.1.1.282</ecNumber>
    </recommendedName>
    <alternativeName>
        <fullName evidence="1">NAD-dependent shikimate 5-dehydrogenase</fullName>
    </alternativeName>
</protein>
<evidence type="ECO:0000255" key="1">
    <source>
        <dbReference type="HAMAP-Rule" id="MF_01578"/>
    </source>
</evidence>
<keyword id="KW-0028">Amino-acid biosynthesis</keyword>
<keyword id="KW-0057">Aromatic amino acid biosynthesis</keyword>
<keyword id="KW-0520">NAD</keyword>
<keyword id="KW-0521">NADP</keyword>
<keyword id="KW-0560">Oxidoreductase</keyword>
<proteinExistence type="inferred from homology"/>
<name>YDIB_SALNS</name>
<sequence>MDVTAKYELIGLMAYPIRHSLSPEMQNKALEKAGLPYTYMAFEVDNTTFASAIEGLKALKMRGTGVSMPNKQLACEYVDELTPAAKLVGAINTIVNDDGYLRGYNTDGTGHIRAIKESGFDIRGKTMVLLGAGGAATAIGAQAAIEGIKEIKLFNRKDDFFEKAVAFAKRVNENTDCVVTVTDLADQHAFTEALASADILTNGTKVGMKPLENESLIGDVSLLRPELLVTECVYNPHMTKLLQQAQQAGCKTIDGYGMLLWQGAEQFELWTGKAFPLDYVKQVMGFTA</sequence>
<comment type="function">
    <text evidence="1">The actual biological function of YdiB remains unclear, nor is it known whether 3-dehydroshikimate or quinate represents the natural substrate. Catalyzes the reversible NAD-dependent reduction of both 3-dehydroshikimate (DHSA) and 3-dehydroquinate to yield shikimate (SA) and quinate, respectively. It can use both NAD or NADP for catalysis, however it has higher catalytic efficiency with NAD.</text>
</comment>
<comment type="catalytic activity">
    <reaction evidence="1">
        <text>L-quinate + NAD(+) = 3-dehydroquinate + NADH + H(+)</text>
        <dbReference type="Rhea" id="RHEA:22364"/>
        <dbReference type="ChEBI" id="CHEBI:15378"/>
        <dbReference type="ChEBI" id="CHEBI:29751"/>
        <dbReference type="ChEBI" id="CHEBI:32364"/>
        <dbReference type="ChEBI" id="CHEBI:57540"/>
        <dbReference type="ChEBI" id="CHEBI:57945"/>
        <dbReference type="EC" id="1.1.1.282"/>
    </reaction>
</comment>
<comment type="catalytic activity">
    <reaction evidence="1">
        <text>L-quinate + NADP(+) = 3-dehydroquinate + NADPH + H(+)</text>
        <dbReference type="Rhea" id="RHEA:18425"/>
        <dbReference type="ChEBI" id="CHEBI:15378"/>
        <dbReference type="ChEBI" id="CHEBI:29751"/>
        <dbReference type="ChEBI" id="CHEBI:32364"/>
        <dbReference type="ChEBI" id="CHEBI:57783"/>
        <dbReference type="ChEBI" id="CHEBI:58349"/>
        <dbReference type="EC" id="1.1.1.282"/>
    </reaction>
</comment>
<comment type="catalytic activity">
    <reaction evidence="1">
        <text>shikimate + NADP(+) = 3-dehydroshikimate + NADPH + H(+)</text>
        <dbReference type="Rhea" id="RHEA:17737"/>
        <dbReference type="ChEBI" id="CHEBI:15378"/>
        <dbReference type="ChEBI" id="CHEBI:16630"/>
        <dbReference type="ChEBI" id="CHEBI:36208"/>
        <dbReference type="ChEBI" id="CHEBI:57783"/>
        <dbReference type="ChEBI" id="CHEBI:58349"/>
        <dbReference type="EC" id="1.1.1.282"/>
    </reaction>
</comment>
<comment type="catalytic activity">
    <reaction evidence="1">
        <text>shikimate + NAD(+) = 3-dehydroshikimate + NADH + H(+)</text>
        <dbReference type="Rhea" id="RHEA:17741"/>
        <dbReference type="ChEBI" id="CHEBI:15378"/>
        <dbReference type="ChEBI" id="CHEBI:16630"/>
        <dbReference type="ChEBI" id="CHEBI:36208"/>
        <dbReference type="ChEBI" id="CHEBI:57540"/>
        <dbReference type="ChEBI" id="CHEBI:57945"/>
        <dbReference type="EC" id="1.1.1.282"/>
    </reaction>
</comment>
<comment type="pathway">
    <text evidence="1">Metabolic intermediate biosynthesis; chorismate biosynthesis; chorismate from D-erythrose 4-phosphate and phosphoenolpyruvate: step 4/7.</text>
</comment>
<comment type="subunit">
    <text evidence="1">Homodimer.</text>
</comment>
<comment type="similarity">
    <text evidence="1">Belongs to the shikimate dehydrogenase family.</text>
</comment>
<organism>
    <name type="scientific">Salmonella newport (strain SL254)</name>
    <dbReference type="NCBI Taxonomy" id="423368"/>
    <lineage>
        <taxon>Bacteria</taxon>
        <taxon>Pseudomonadati</taxon>
        <taxon>Pseudomonadota</taxon>
        <taxon>Gammaproteobacteria</taxon>
        <taxon>Enterobacterales</taxon>
        <taxon>Enterobacteriaceae</taxon>
        <taxon>Salmonella</taxon>
    </lineage>
</organism>
<accession>B4T4Q4</accession>
<reference key="1">
    <citation type="journal article" date="2011" name="J. Bacteriol.">
        <title>Comparative genomics of 28 Salmonella enterica isolates: evidence for CRISPR-mediated adaptive sublineage evolution.</title>
        <authorList>
            <person name="Fricke W.F."/>
            <person name="Mammel M.K."/>
            <person name="McDermott P.F."/>
            <person name="Tartera C."/>
            <person name="White D.G."/>
            <person name="Leclerc J.E."/>
            <person name="Ravel J."/>
            <person name="Cebula T.A."/>
        </authorList>
    </citation>
    <scope>NUCLEOTIDE SEQUENCE [LARGE SCALE GENOMIC DNA]</scope>
    <source>
        <strain>SL254</strain>
    </source>
</reference>
<gene>
    <name evidence="1" type="primary">ydiB</name>
    <name type="ordered locus">SNSL254_A1471</name>
</gene>
<feature type="chain" id="PRO_1000147560" description="Quinate/shikimate dehydrogenase">
    <location>
        <begin position="1"/>
        <end position="288"/>
    </location>
</feature>
<feature type="binding site" evidence="1">
    <location>
        <position position="71"/>
    </location>
    <ligand>
        <name>substrate</name>
    </ligand>
</feature>
<feature type="binding site" evidence="1">
    <location>
        <position position="107"/>
    </location>
    <ligand>
        <name>substrate</name>
    </ligand>
</feature>
<feature type="binding site" evidence="1">
    <location>
        <begin position="132"/>
        <end position="135"/>
    </location>
    <ligand>
        <name>NAD(+)</name>
        <dbReference type="ChEBI" id="CHEBI:57540"/>
    </ligand>
</feature>
<feature type="binding site" evidence="1">
    <location>
        <begin position="155"/>
        <end position="158"/>
    </location>
    <ligand>
        <name>NAD(+)</name>
        <dbReference type="ChEBI" id="CHEBI:57540"/>
    </ligand>
</feature>
<feature type="binding site" evidence="1">
    <location>
        <position position="205"/>
    </location>
    <ligand>
        <name>NAD(+)</name>
        <dbReference type="ChEBI" id="CHEBI:57540"/>
    </ligand>
</feature>
<feature type="binding site" evidence="1">
    <location>
        <begin position="232"/>
        <end position="235"/>
    </location>
    <ligand>
        <name>NAD(+)</name>
        <dbReference type="ChEBI" id="CHEBI:57540"/>
    </ligand>
</feature>
<feature type="binding site" evidence="1">
    <location>
        <position position="255"/>
    </location>
    <ligand>
        <name>NAD(+)</name>
        <dbReference type="ChEBI" id="CHEBI:57540"/>
    </ligand>
</feature>